<comment type="function">
    <text evidence="2">Binds directly to 23S rRNA. The L1 stalk is quite mobile in the ribosome, and is involved in E site tRNA release.</text>
</comment>
<comment type="function">
    <text evidence="2">Protein L1 is also a translational repressor protein, it controls the translation of the L11 operon by binding to its mRNA.</text>
</comment>
<comment type="subunit">
    <text evidence="2">Part of the 50S ribosomal subunit.</text>
</comment>
<comment type="similarity">
    <text evidence="2">Belongs to the universal ribosomal protein uL1 family.</text>
</comment>
<organism>
    <name type="scientific">Escherichia coli O6:H1 (strain CFT073 / ATCC 700928 / UPEC)</name>
    <dbReference type="NCBI Taxonomy" id="199310"/>
    <lineage>
        <taxon>Bacteria</taxon>
        <taxon>Pseudomonadati</taxon>
        <taxon>Pseudomonadota</taxon>
        <taxon>Gammaproteobacteria</taxon>
        <taxon>Enterobacterales</taxon>
        <taxon>Enterobacteriaceae</taxon>
        <taxon>Escherichia</taxon>
    </lineage>
</organism>
<reference key="1">
    <citation type="journal article" date="2002" name="Proc. Natl. Acad. Sci. U.S.A.">
        <title>Extensive mosaic structure revealed by the complete genome sequence of uropathogenic Escherichia coli.</title>
        <authorList>
            <person name="Welch R.A."/>
            <person name="Burland V."/>
            <person name="Plunkett G. III"/>
            <person name="Redford P."/>
            <person name="Roesch P."/>
            <person name="Rasko D."/>
            <person name="Buckles E.L."/>
            <person name="Liou S.-R."/>
            <person name="Boutin A."/>
            <person name="Hackett J."/>
            <person name="Stroud D."/>
            <person name="Mayhew G.F."/>
            <person name="Rose D.J."/>
            <person name="Zhou S."/>
            <person name="Schwartz D.C."/>
            <person name="Perna N.T."/>
            <person name="Mobley H.L.T."/>
            <person name="Donnenberg M.S."/>
            <person name="Blattner F.R."/>
        </authorList>
    </citation>
    <scope>NUCLEOTIDE SEQUENCE [LARGE SCALE GENOMIC DNA]</scope>
    <source>
        <strain>CFT073 / ATCC 700928 / UPEC</strain>
    </source>
</reference>
<name>RL1_ECOL6</name>
<gene>
    <name evidence="2" type="primary">rplA</name>
    <name type="ordered locus">c4940</name>
</gene>
<accession>P0A7L1</accession>
<accession>P02384</accession>
<dbReference type="EMBL" id="AE014075">
    <property type="protein sequence ID" value="AAN83368.1"/>
    <property type="molecule type" value="Genomic_DNA"/>
</dbReference>
<dbReference type="RefSeq" id="WP_001096684.1">
    <property type="nucleotide sequence ID" value="NZ_CP051263.1"/>
</dbReference>
<dbReference type="SMR" id="P0A7L1"/>
<dbReference type="STRING" id="199310.c4940"/>
<dbReference type="GeneID" id="93777910"/>
<dbReference type="KEGG" id="ecc:c4940"/>
<dbReference type="eggNOG" id="COG0081">
    <property type="taxonomic scope" value="Bacteria"/>
</dbReference>
<dbReference type="HOGENOM" id="CLU_062853_0_0_6"/>
<dbReference type="BioCyc" id="ECOL199310:C4940-MONOMER"/>
<dbReference type="Proteomes" id="UP000001410">
    <property type="component" value="Chromosome"/>
</dbReference>
<dbReference type="GO" id="GO:0022625">
    <property type="term" value="C:cytosolic large ribosomal subunit"/>
    <property type="evidence" value="ECO:0007669"/>
    <property type="project" value="TreeGrafter"/>
</dbReference>
<dbReference type="GO" id="GO:0019843">
    <property type="term" value="F:rRNA binding"/>
    <property type="evidence" value="ECO:0007669"/>
    <property type="project" value="UniProtKB-UniRule"/>
</dbReference>
<dbReference type="GO" id="GO:0003735">
    <property type="term" value="F:structural constituent of ribosome"/>
    <property type="evidence" value="ECO:0007669"/>
    <property type="project" value="InterPro"/>
</dbReference>
<dbReference type="GO" id="GO:0000049">
    <property type="term" value="F:tRNA binding"/>
    <property type="evidence" value="ECO:0007669"/>
    <property type="project" value="UniProtKB-KW"/>
</dbReference>
<dbReference type="GO" id="GO:0006417">
    <property type="term" value="P:regulation of translation"/>
    <property type="evidence" value="ECO:0007669"/>
    <property type="project" value="UniProtKB-KW"/>
</dbReference>
<dbReference type="GO" id="GO:0006412">
    <property type="term" value="P:translation"/>
    <property type="evidence" value="ECO:0007669"/>
    <property type="project" value="UniProtKB-UniRule"/>
</dbReference>
<dbReference type="CDD" id="cd00403">
    <property type="entry name" value="Ribosomal_L1"/>
    <property type="match status" value="1"/>
</dbReference>
<dbReference type="FunFam" id="3.40.50.790:FF:000001">
    <property type="entry name" value="50S ribosomal protein L1"/>
    <property type="match status" value="1"/>
</dbReference>
<dbReference type="Gene3D" id="3.30.190.20">
    <property type="match status" value="1"/>
</dbReference>
<dbReference type="Gene3D" id="3.40.50.790">
    <property type="match status" value="1"/>
</dbReference>
<dbReference type="HAMAP" id="MF_01318_B">
    <property type="entry name" value="Ribosomal_uL1_B"/>
    <property type="match status" value="1"/>
</dbReference>
<dbReference type="InterPro" id="IPR005878">
    <property type="entry name" value="Ribosom_uL1_bac-type"/>
</dbReference>
<dbReference type="InterPro" id="IPR002143">
    <property type="entry name" value="Ribosomal_uL1"/>
</dbReference>
<dbReference type="InterPro" id="IPR023674">
    <property type="entry name" value="Ribosomal_uL1-like"/>
</dbReference>
<dbReference type="InterPro" id="IPR028364">
    <property type="entry name" value="Ribosomal_uL1/biogenesis"/>
</dbReference>
<dbReference type="InterPro" id="IPR016095">
    <property type="entry name" value="Ribosomal_uL1_3-a/b-sand"/>
</dbReference>
<dbReference type="InterPro" id="IPR023673">
    <property type="entry name" value="Ribosomal_uL1_CS"/>
</dbReference>
<dbReference type="NCBIfam" id="TIGR01169">
    <property type="entry name" value="rplA_bact"/>
    <property type="match status" value="1"/>
</dbReference>
<dbReference type="PANTHER" id="PTHR36427">
    <property type="entry name" value="54S RIBOSOMAL PROTEIN L1, MITOCHONDRIAL"/>
    <property type="match status" value="1"/>
</dbReference>
<dbReference type="PANTHER" id="PTHR36427:SF3">
    <property type="entry name" value="LARGE RIBOSOMAL SUBUNIT PROTEIN UL1M"/>
    <property type="match status" value="1"/>
</dbReference>
<dbReference type="Pfam" id="PF00687">
    <property type="entry name" value="Ribosomal_L1"/>
    <property type="match status" value="1"/>
</dbReference>
<dbReference type="PIRSF" id="PIRSF002155">
    <property type="entry name" value="Ribosomal_L1"/>
    <property type="match status" value="1"/>
</dbReference>
<dbReference type="SUPFAM" id="SSF56808">
    <property type="entry name" value="Ribosomal protein L1"/>
    <property type="match status" value="1"/>
</dbReference>
<dbReference type="PROSITE" id="PS01199">
    <property type="entry name" value="RIBOSOMAL_L1"/>
    <property type="match status" value="1"/>
</dbReference>
<proteinExistence type="inferred from homology"/>
<feature type="initiator methionine" description="Removed" evidence="1">
    <location>
        <position position="1"/>
    </location>
</feature>
<feature type="chain" id="PRO_0000125656" description="Large ribosomal subunit protein uL1">
    <location>
        <begin position="2"/>
        <end position="234"/>
    </location>
</feature>
<keyword id="KW-1185">Reference proteome</keyword>
<keyword id="KW-0678">Repressor</keyword>
<keyword id="KW-0687">Ribonucleoprotein</keyword>
<keyword id="KW-0689">Ribosomal protein</keyword>
<keyword id="KW-0694">RNA-binding</keyword>
<keyword id="KW-0699">rRNA-binding</keyword>
<keyword id="KW-0810">Translation regulation</keyword>
<keyword id="KW-0820">tRNA-binding</keyword>
<evidence type="ECO:0000250" key="1"/>
<evidence type="ECO:0000255" key="2">
    <source>
        <dbReference type="HAMAP-Rule" id="MF_01318"/>
    </source>
</evidence>
<evidence type="ECO:0000305" key="3"/>
<protein>
    <recommendedName>
        <fullName evidence="2">Large ribosomal subunit protein uL1</fullName>
    </recommendedName>
    <alternativeName>
        <fullName evidence="3">50S ribosomal protein L1</fullName>
    </alternativeName>
</protein>
<sequence>MAKLTKRMRVIREKVDATKQYDINEAIALLKELATAKFVESVDVAVNLGIDARKSDQNVRGATVLPHGTGRSVRVAVFTQGANAEAAKAAGAELVGMEDLADQIKKGEMNFDVVIASPDAMRVVGQLGQVLGPRGLMPNPKVGTVTPNVAEAVKNAKAGQVRYRNDKNGIIHTTIGKVDFDADKLKENLEALLVALKKAKPTQAKGVYIKKVSISTTMGAGVAVDQAGLSASVN</sequence>